<organism>
    <name type="scientific">Actinobacillus pleuropneumoniae serotype 3 (strain JL03)</name>
    <dbReference type="NCBI Taxonomy" id="434271"/>
    <lineage>
        <taxon>Bacteria</taxon>
        <taxon>Pseudomonadati</taxon>
        <taxon>Pseudomonadota</taxon>
        <taxon>Gammaproteobacteria</taxon>
        <taxon>Pasteurellales</taxon>
        <taxon>Pasteurellaceae</taxon>
        <taxon>Actinobacillus</taxon>
    </lineage>
</organism>
<sequence>MNFDVVIIGGGLAGLTCGIALQEQGKRCVIINNGQAAIDFSSGSMDLLSRLPSGQKVENVYQSLDELKLQAPEHPYSILGKDQVLAKAQQFEQLAQSLNLHLEGSTVQNHERITPLGGLRATWLSPNSVPTVKHLTALADKQVAILGIEGYHDFQPQLLADNLKQHSQFADYEFTIGYLNIPELDYLRQNSREFRSVNIAQLLEHKLSFQDLVQEIKQAAGNAKAVFLPACFGLDNQDFFNSLQQATGLALFELPTLPPSLLGIRQHRQLRSRFEQLGGMMMNGDRAVKAEFEGKNVARIFTTSHQEEPISADYFVLAAGSFFSNGLVAEFERVKEPVFDLDICGCKNFDSSDRFTWTNNRFAAPQPYQSAGVVINSACQVQKNGEVVSNLYAVGNVIGGFQGIEQGCGSGVAVVTALTVAEQIGGTK</sequence>
<dbReference type="EC" id="1.1.5.3" evidence="1"/>
<dbReference type="EMBL" id="CP000687">
    <property type="protein sequence ID" value="ABY68988.1"/>
    <property type="molecule type" value="Genomic_DNA"/>
</dbReference>
<dbReference type="RefSeq" id="WP_005611546.1">
    <property type="nucleotide sequence ID" value="NC_010278.1"/>
</dbReference>
<dbReference type="KEGG" id="apj:APJL_0399"/>
<dbReference type="HOGENOM" id="CLU_047793_0_0_6"/>
<dbReference type="UniPathway" id="UPA00618">
    <property type="reaction ID" value="UER00673"/>
</dbReference>
<dbReference type="Proteomes" id="UP000008547">
    <property type="component" value="Chromosome"/>
</dbReference>
<dbReference type="GO" id="GO:0009331">
    <property type="term" value="C:glycerol-3-phosphate dehydrogenase (FAD) complex"/>
    <property type="evidence" value="ECO:0007669"/>
    <property type="project" value="InterPro"/>
</dbReference>
<dbReference type="GO" id="GO:0004368">
    <property type="term" value="F:glycerol-3-phosphate dehydrogenase (quinone) activity"/>
    <property type="evidence" value="ECO:0007669"/>
    <property type="project" value="UniProtKB-UniRule"/>
</dbReference>
<dbReference type="GO" id="GO:0019563">
    <property type="term" value="P:glycerol catabolic process"/>
    <property type="evidence" value="ECO:0007669"/>
    <property type="project" value="UniProtKB-UniRule"/>
</dbReference>
<dbReference type="Gene3D" id="3.50.50.60">
    <property type="entry name" value="FAD/NAD(P)-binding domain"/>
    <property type="match status" value="2"/>
</dbReference>
<dbReference type="HAMAP" id="MF_00753">
    <property type="entry name" value="Glycerol3P_GlpB"/>
    <property type="match status" value="1"/>
</dbReference>
<dbReference type="InterPro" id="IPR003953">
    <property type="entry name" value="FAD-dep_OxRdtase_2_FAD-bd"/>
</dbReference>
<dbReference type="InterPro" id="IPR050315">
    <property type="entry name" value="FAD-oxidoreductase_2"/>
</dbReference>
<dbReference type="InterPro" id="IPR036188">
    <property type="entry name" value="FAD/NAD-bd_sf"/>
</dbReference>
<dbReference type="InterPro" id="IPR009158">
    <property type="entry name" value="G3P_DH_GlpB_su"/>
</dbReference>
<dbReference type="NCBIfam" id="TIGR03378">
    <property type="entry name" value="glycerol3P_GlpB"/>
    <property type="match status" value="1"/>
</dbReference>
<dbReference type="NCBIfam" id="NF003718">
    <property type="entry name" value="PRK05329.1-1"/>
    <property type="match status" value="1"/>
</dbReference>
<dbReference type="NCBIfam" id="NF003719">
    <property type="entry name" value="PRK05329.1-2"/>
    <property type="match status" value="1"/>
</dbReference>
<dbReference type="NCBIfam" id="NF003720">
    <property type="entry name" value="PRK05329.1-3"/>
    <property type="match status" value="1"/>
</dbReference>
<dbReference type="NCBIfam" id="NF003721">
    <property type="entry name" value="PRK05329.1-4"/>
    <property type="match status" value="1"/>
</dbReference>
<dbReference type="PANTHER" id="PTHR43400:SF11">
    <property type="entry name" value="ANAEROBIC GLYCEROL-3-PHOSPHATE DEHYDROGENASE SUBUNIT B"/>
    <property type="match status" value="1"/>
</dbReference>
<dbReference type="PANTHER" id="PTHR43400">
    <property type="entry name" value="FUMARATE REDUCTASE"/>
    <property type="match status" value="1"/>
</dbReference>
<dbReference type="Pfam" id="PF00890">
    <property type="entry name" value="FAD_binding_2"/>
    <property type="match status" value="1"/>
</dbReference>
<dbReference type="PIRSF" id="PIRSF000141">
    <property type="entry name" value="Anaerobic_G3P_dh"/>
    <property type="match status" value="1"/>
</dbReference>
<dbReference type="SUPFAM" id="SSF51905">
    <property type="entry name" value="FAD/NAD(P)-binding domain"/>
    <property type="match status" value="1"/>
</dbReference>
<keyword id="KW-0285">Flavoprotein</keyword>
<keyword id="KW-0288">FMN</keyword>
<keyword id="KW-0560">Oxidoreductase</keyword>
<protein>
    <recommendedName>
        <fullName evidence="1">Anaerobic glycerol-3-phosphate dehydrogenase subunit B</fullName>
        <shortName evidence="1">Anaerobic G-3-P dehydrogenase subunit B</shortName>
        <shortName evidence="1">Anaerobic G3Pdhase B</shortName>
        <ecNumber evidence="1">1.1.5.3</ecNumber>
    </recommendedName>
</protein>
<comment type="function">
    <text evidence="1">Conversion of glycerol 3-phosphate to dihydroxyacetone. Uses fumarate or nitrate as electron acceptor.</text>
</comment>
<comment type="catalytic activity">
    <reaction evidence="1">
        <text>a quinone + sn-glycerol 3-phosphate = dihydroxyacetone phosphate + a quinol</text>
        <dbReference type="Rhea" id="RHEA:18977"/>
        <dbReference type="ChEBI" id="CHEBI:24646"/>
        <dbReference type="ChEBI" id="CHEBI:57597"/>
        <dbReference type="ChEBI" id="CHEBI:57642"/>
        <dbReference type="ChEBI" id="CHEBI:132124"/>
        <dbReference type="EC" id="1.1.5.3"/>
    </reaction>
</comment>
<comment type="cofactor">
    <cofactor evidence="1">
        <name>FMN</name>
        <dbReference type="ChEBI" id="CHEBI:58210"/>
    </cofactor>
</comment>
<comment type="pathway">
    <text evidence="1">Polyol metabolism; glycerol degradation via glycerol kinase pathway; glycerone phosphate from sn-glycerol 3-phosphate (anaerobic route): step 1/1.</text>
</comment>
<comment type="subunit">
    <text evidence="1">Composed of a catalytic GlpA/B dimer and of membrane bound GlpC.</text>
</comment>
<comment type="similarity">
    <text evidence="1">Belongs to the anaerobic G-3-P dehydrogenase subunit B family.</text>
</comment>
<name>GLPB_ACTPJ</name>
<gene>
    <name evidence="1" type="primary">glpB</name>
    <name type="ordered locus">APJL_0399</name>
</gene>
<feature type="chain" id="PRO_1000133354" description="Anaerobic glycerol-3-phosphate dehydrogenase subunit B">
    <location>
        <begin position="1"/>
        <end position="428"/>
    </location>
</feature>
<evidence type="ECO:0000255" key="1">
    <source>
        <dbReference type="HAMAP-Rule" id="MF_00753"/>
    </source>
</evidence>
<reference key="1">
    <citation type="journal article" date="2008" name="PLoS ONE">
        <title>Genome biology of Actinobacillus pleuropneumoniae JL03, an isolate of serotype 3 prevalent in China.</title>
        <authorList>
            <person name="Xu Z."/>
            <person name="Zhou Y."/>
            <person name="Li L."/>
            <person name="Zhou R."/>
            <person name="Xiao S."/>
            <person name="Wan Y."/>
            <person name="Zhang S."/>
            <person name="Wang K."/>
            <person name="Li W."/>
            <person name="Li L."/>
            <person name="Jin H."/>
            <person name="Kang M."/>
            <person name="Dalai B."/>
            <person name="Li T."/>
            <person name="Liu L."/>
            <person name="Cheng Y."/>
            <person name="Zhang L."/>
            <person name="Xu T."/>
            <person name="Zheng H."/>
            <person name="Pu S."/>
            <person name="Wang B."/>
            <person name="Gu W."/>
            <person name="Zhang X.L."/>
            <person name="Zhu G.-F."/>
            <person name="Wang S."/>
            <person name="Zhao G.-P."/>
            <person name="Chen H."/>
        </authorList>
    </citation>
    <scope>NUCLEOTIDE SEQUENCE [LARGE SCALE GENOMIC DNA]</scope>
    <source>
        <strain>JL03</strain>
    </source>
</reference>
<proteinExistence type="inferred from homology"/>
<accession>B0BTN3</accession>